<reference key="1">
    <citation type="journal article" date="2011" name="Proc. Natl. Acad. Sci. U.S.A.">
        <title>Genomic anatomy of Escherichia coli O157:H7 outbreaks.</title>
        <authorList>
            <person name="Eppinger M."/>
            <person name="Mammel M.K."/>
            <person name="Leclerc J.E."/>
            <person name="Ravel J."/>
            <person name="Cebula T.A."/>
        </authorList>
    </citation>
    <scope>NUCLEOTIDE SEQUENCE [LARGE SCALE GENOMIC DNA]</scope>
    <source>
        <strain>EC4115 / EHEC</strain>
    </source>
</reference>
<dbReference type="EMBL" id="CP001164">
    <property type="protein sequence ID" value="ACI37332.1"/>
    <property type="molecule type" value="Genomic_DNA"/>
</dbReference>
<dbReference type="RefSeq" id="WP_000858212.1">
    <property type="nucleotide sequence ID" value="NC_011353.1"/>
</dbReference>
<dbReference type="SMR" id="B5YVH5"/>
<dbReference type="KEGG" id="ecf:ECH74115_4892"/>
<dbReference type="HOGENOM" id="CLU_019375_7_0_6"/>
<dbReference type="GO" id="GO:0005886">
    <property type="term" value="C:plasma membrane"/>
    <property type="evidence" value="ECO:0007669"/>
    <property type="project" value="UniProtKB-SubCell"/>
</dbReference>
<dbReference type="GO" id="GO:0015138">
    <property type="term" value="F:fumarate transmembrane transporter activity"/>
    <property type="evidence" value="ECO:0007669"/>
    <property type="project" value="TreeGrafter"/>
</dbReference>
<dbReference type="GO" id="GO:0015366">
    <property type="term" value="F:malate:proton symporter activity"/>
    <property type="evidence" value="ECO:0007669"/>
    <property type="project" value="TreeGrafter"/>
</dbReference>
<dbReference type="GO" id="GO:0015141">
    <property type="term" value="F:succinate transmembrane transporter activity"/>
    <property type="evidence" value="ECO:0007669"/>
    <property type="project" value="TreeGrafter"/>
</dbReference>
<dbReference type="GO" id="GO:0070778">
    <property type="term" value="P:L-aspartate transmembrane transport"/>
    <property type="evidence" value="ECO:0007669"/>
    <property type="project" value="TreeGrafter"/>
</dbReference>
<dbReference type="FunFam" id="1.10.3860.10:FF:000001">
    <property type="entry name" value="C4-dicarboxylate transport protein"/>
    <property type="match status" value="1"/>
</dbReference>
<dbReference type="Gene3D" id="1.10.3860.10">
    <property type="entry name" value="Sodium:dicarboxylate symporter"/>
    <property type="match status" value="1"/>
</dbReference>
<dbReference type="HAMAP" id="MF_01300">
    <property type="entry name" value="C4_dicarb_transport"/>
    <property type="match status" value="1"/>
</dbReference>
<dbReference type="InterPro" id="IPR023954">
    <property type="entry name" value="C4_dicarb_transport"/>
</dbReference>
<dbReference type="InterPro" id="IPR001991">
    <property type="entry name" value="Na-dicarboxylate_symporter"/>
</dbReference>
<dbReference type="InterPro" id="IPR018107">
    <property type="entry name" value="Na-dicarboxylate_symporter_CS"/>
</dbReference>
<dbReference type="InterPro" id="IPR036458">
    <property type="entry name" value="Na:dicarbo_symporter_sf"/>
</dbReference>
<dbReference type="NCBIfam" id="NF002461">
    <property type="entry name" value="PRK01663.1"/>
    <property type="match status" value="1"/>
</dbReference>
<dbReference type="NCBIfam" id="NF009587">
    <property type="entry name" value="PRK13027.1"/>
    <property type="match status" value="1"/>
</dbReference>
<dbReference type="PANTHER" id="PTHR42865:SF1">
    <property type="entry name" value="AEROBIC C4-DICARBOXYLATE TRANSPORT PROTEIN"/>
    <property type="match status" value="1"/>
</dbReference>
<dbReference type="PANTHER" id="PTHR42865">
    <property type="entry name" value="PROTON/GLUTAMATE-ASPARTATE SYMPORTER"/>
    <property type="match status" value="1"/>
</dbReference>
<dbReference type="Pfam" id="PF00375">
    <property type="entry name" value="SDF"/>
    <property type="match status" value="1"/>
</dbReference>
<dbReference type="PRINTS" id="PR00173">
    <property type="entry name" value="EDTRNSPORT"/>
</dbReference>
<dbReference type="SUPFAM" id="SSF118215">
    <property type="entry name" value="Proton glutamate symport protein"/>
    <property type="match status" value="1"/>
</dbReference>
<dbReference type="PROSITE" id="PS00713">
    <property type="entry name" value="NA_DICARBOXYL_SYMP_1"/>
    <property type="match status" value="1"/>
</dbReference>
<dbReference type="PROSITE" id="PS00714">
    <property type="entry name" value="NA_DICARBOXYL_SYMP_2"/>
    <property type="match status" value="1"/>
</dbReference>
<gene>
    <name evidence="1" type="primary">dctA</name>
    <name type="ordered locus">ECH74115_4892</name>
</gene>
<protein>
    <recommendedName>
        <fullName evidence="1">C4-dicarboxylate transport protein</fullName>
    </recommendedName>
</protein>
<feature type="chain" id="PRO_1000140451" description="C4-dicarboxylate transport protein">
    <location>
        <begin position="1"/>
        <end position="428"/>
    </location>
</feature>
<feature type="transmembrane region" description="Helical" evidence="1">
    <location>
        <begin position="8"/>
        <end position="28"/>
    </location>
</feature>
<feature type="transmembrane region" description="Helical" evidence="1">
    <location>
        <begin position="44"/>
        <end position="64"/>
    </location>
</feature>
<feature type="transmembrane region" description="Helical" evidence="1">
    <location>
        <begin position="76"/>
        <end position="96"/>
    </location>
</feature>
<feature type="transmembrane region" description="Helical" evidence="1">
    <location>
        <begin position="142"/>
        <end position="162"/>
    </location>
</feature>
<feature type="transmembrane region" description="Helical" evidence="1">
    <location>
        <begin position="184"/>
        <end position="204"/>
    </location>
</feature>
<feature type="transmembrane region" description="Helical" evidence="1">
    <location>
        <begin position="222"/>
        <end position="242"/>
    </location>
</feature>
<feature type="transmembrane region" description="Helical" evidence="1">
    <location>
        <begin position="326"/>
        <end position="346"/>
    </location>
</feature>
<feature type="transmembrane region" description="Helical" evidence="1">
    <location>
        <begin position="352"/>
        <end position="372"/>
    </location>
</feature>
<accession>B5YVH5</accession>
<sequence>MKTSLFKSLYFQVLTAIAIGILLGHFYPEIGEQMKPLGDGFVKLIKMIIAPVIFCTVVTGIAGMESMKAVGRTGAVALLYFEIVSTIALIIGLIIVNVVQPGAGMNVDPATLDAKAVAVYADQAKDQGIVAFIMDVIPASVIGAFASGNILQVLLFAVLFGFALHRLGSKGQLIFNVIESFSQVIFGIINMIMRLAPIGAFGAMAFTIGKYGVGTLVQLGQLIICFYITCILFVVLVLGSIAKATGFSIFKFIRYIREELLIVLGTSSSESALPRMLDKMEKLGCRKSVVGLVIPTGYSFNLDGTSIYLTMAAVFIAQATNSQMDIVHQITLLIVLLLSSKGAAGVTGSGFIVLAATLSAVGHLPVAGLALILGIDRFMSEARALTNLVGNGVATIVVAKWVKELDHKKLDDALNNRAPDGKTHELSS</sequence>
<organism>
    <name type="scientific">Escherichia coli O157:H7 (strain EC4115 / EHEC)</name>
    <dbReference type="NCBI Taxonomy" id="444450"/>
    <lineage>
        <taxon>Bacteria</taxon>
        <taxon>Pseudomonadati</taxon>
        <taxon>Pseudomonadota</taxon>
        <taxon>Gammaproteobacteria</taxon>
        <taxon>Enterobacterales</taxon>
        <taxon>Enterobacteriaceae</taxon>
        <taxon>Escherichia</taxon>
    </lineage>
</organism>
<keyword id="KW-0997">Cell inner membrane</keyword>
<keyword id="KW-1003">Cell membrane</keyword>
<keyword id="KW-0472">Membrane</keyword>
<keyword id="KW-0769">Symport</keyword>
<keyword id="KW-0812">Transmembrane</keyword>
<keyword id="KW-1133">Transmembrane helix</keyword>
<keyword id="KW-0813">Transport</keyword>
<proteinExistence type="inferred from homology"/>
<name>DCTA_ECO5E</name>
<comment type="function">
    <text evidence="1">Responsible for the transport of dicarboxylates such as succinate, fumarate, and malate from the periplasm across the membrane.</text>
</comment>
<comment type="subcellular location">
    <subcellularLocation>
        <location evidence="1">Cell inner membrane</location>
        <topology evidence="1">Multi-pass membrane protein</topology>
    </subcellularLocation>
</comment>
<comment type="similarity">
    <text evidence="1">Belongs to the dicarboxylate/amino acid:cation symporter (DAACS) (TC 2.A.23) family.</text>
</comment>
<evidence type="ECO:0000255" key="1">
    <source>
        <dbReference type="HAMAP-Rule" id="MF_01300"/>
    </source>
</evidence>